<sequence>MASLLDCGAGLASANASFSTATDLSQENGLFSSWFERCSKTQIAVTIFAVLIAYDQFMYIWRKGSIAGPAFKIPFMGPFIQALYPKFDAYLAQWASGPLSCVSVFHKFVVLASDRDIAHKVFKSPTFVKPCIVPMAETLLRPSAWVFLQGRAHTEYRRGLNGLFTNKAISTYLPAQEKVYDDYFERFVAASEANKSKPMAFMRLFREINCALSCRTFFGDYISQDAVEKIAEDFYQVTAALELVNVPLSVYIPFTKCWRGKRTADAVLAEFASCAAACKANMAAGAEPKCIVDQWVLHMMESKRYNDRIAAGETGAEKPKNLIREFTDEEIGQTMFTFLFASQDASSSATTWLFQILAQRPDVLDRLREENLSVRGGNKETPFELSMLESLPYTNAVIKELLRYRPPVIFVPYEATKKFPVTPNYTISKGSMIVPSCYPALHDPQVYPDPETFDPERWITGDAESKTKNWLVFGAGAHDCLARKYVPLTMAAMIGKASLELDWVHHATSQSEEIRVFATLFPEDECQLVFTRQG</sequence>
<reference key="1">
    <citation type="journal article" date="2007" name="Science">
        <title>The Fusarium graminearum genome reveals a link between localized polymorphism and pathogen specialization.</title>
        <authorList>
            <person name="Cuomo C.A."/>
            <person name="Gueldener U."/>
            <person name="Xu J.-R."/>
            <person name="Trail F."/>
            <person name="Turgeon B.G."/>
            <person name="Di Pietro A."/>
            <person name="Walton J.D."/>
            <person name="Ma L.-J."/>
            <person name="Baker S.E."/>
            <person name="Rep M."/>
            <person name="Adam G."/>
            <person name="Antoniw J."/>
            <person name="Baldwin T."/>
            <person name="Calvo S.E."/>
            <person name="Chang Y.-L."/>
            <person name="DeCaprio D."/>
            <person name="Gale L.R."/>
            <person name="Gnerre S."/>
            <person name="Goswami R.S."/>
            <person name="Hammond-Kosack K."/>
            <person name="Harris L.J."/>
            <person name="Hilburn K."/>
            <person name="Kennell J.C."/>
            <person name="Kroken S."/>
            <person name="Magnuson J.K."/>
            <person name="Mannhaupt G."/>
            <person name="Mauceli E.W."/>
            <person name="Mewes H.-W."/>
            <person name="Mitterbauer R."/>
            <person name="Muehlbauer G."/>
            <person name="Muensterkoetter M."/>
            <person name="Nelson D."/>
            <person name="O'Donnell K."/>
            <person name="Ouellet T."/>
            <person name="Qi W."/>
            <person name="Quesneville H."/>
            <person name="Roncero M.I.G."/>
            <person name="Seong K.-Y."/>
            <person name="Tetko I.V."/>
            <person name="Urban M."/>
            <person name="Waalwijk C."/>
            <person name="Ward T.J."/>
            <person name="Yao J."/>
            <person name="Birren B.W."/>
            <person name="Kistler H.C."/>
        </authorList>
    </citation>
    <scope>NUCLEOTIDE SEQUENCE [LARGE SCALE GENOMIC DNA]</scope>
    <source>
        <strain>ATCC MYA-4620 / CBS 123657 / FGSC 9075 / NRRL 31084 / PH-1</strain>
    </source>
</reference>
<reference key="2">
    <citation type="journal article" date="2010" name="Nature">
        <title>Comparative genomics reveals mobile pathogenicity chromosomes in Fusarium.</title>
        <authorList>
            <person name="Ma L.-J."/>
            <person name="van der Does H.C."/>
            <person name="Borkovich K.A."/>
            <person name="Coleman J.J."/>
            <person name="Daboussi M.-J."/>
            <person name="Di Pietro A."/>
            <person name="Dufresne M."/>
            <person name="Freitag M."/>
            <person name="Grabherr M."/>
            <person name="Henrissat B."/>
            <person name="Houterman P.M."/>
            <person name="Kang S."/>
            <person name="Shim W.-B."/>
            <person name="Woloshuk C."/>
            <person name="Xie X."/>
            <person name="Xu J.-R."/>
            <person name="Antoniw J."/>
            <person name="Baker S.E."/>
            <person name="Bluhm B.H."/>
            <person name="Breakspear A."/>
            <person name="Brown D.W."/>
            <person name="Butchko R.A.E."/>
            <person name="Chapman S."/>
            <person name="Coulson R."/>
            <person name="Coutinho P.M."/>
            <person name="Danchin E.G.J."/>
            <person name="Diener A."/>
            <person name="Gale L.R."/>
            <person name="Gardiner D.M."/>
            <person name="Goff S."/>
            <person name="Hammond-Kosack K.E."/>
            <person name="Hilburn K."/>
            <person name="Hua-Van A."/>
            <person name="Jonkers W."/>
            <person name="Kazan K."/>
            <person name="Kodira C.D."/>
            <person name="Koehrsen M."/>
            <person name="Kumar L."/>
            <person name="Lee Y.-H."/>
            <person name="Li L."/>
            <person name="Manners J.M."/>
            <person name="Miranda-Saavedra D."/>
            <person name="Mukherjee M."/>
            <person name="Park G."/>
            <person name="Park J."/>
            <person name="Park S.-Y."/>
            <person name="Proctor R.H."/>
            <person name="Regev A."/>
            <person name="Ruiz-Roldan M.C."/>
            <person name="Sain D."/>
            <person name="Sakthikumar S."/>
            <person name="Sykes S."/>
            <person name="Schwartz D.C."/>
            <person name="Turgeon B.G."/>
            <person name="Wapinski I."/>
            <person name="Yoder O."/>
            <person name="Young S."/>
            <person name="Zeng Q."/>
            <person name="Zhou S."/>
            <person name="Galagan J."/>
            <person name="Cuomo C.A."/>
            <person name="Kistler H.C."/>
            <person name="Rep M."/>
        </authorList>
    </citation>
    <scope>GENOME REANNOTATION</scope>
    <source>
        <strain>ATCC MYA-4620 / CBS 123657 / FGSC 9075 / NRRL 31084 / PH-1</strain>
    </source>
</reference>
<reference key="3">
    <citation type="journal article" date="2015" name="BMC Genomics">
        <title>The completed genome sequence of the pathogenic ascomycete fungus Fusarium graminearum.</title>
        <authorList>
            <person name="King R."/>
            <person name="Urban M."/>
            <person name="Hammond-Kosack M.C.U."/>
            <person name="Hassani-Pak K."/>
            <person name="Hammond-Kosack K.E."/>
        </authorList>
    </citation>
    <scope>NUCLEOTIDE SEQUENCE [LARGE SCALE GENOMIC DNA]</scope>
    <source>
        <strain>ATCC MYA-4620 / CBS 123657 / FGSC 9075 / NRRL 31084 / PH-1</strain>
    </source>
</reference>
<reference key="4">
    <citation type="journal article" date="2013" name="New Phytol.">
        <title>Characterization of the sterol 14alpha-demethylases of Fusarium graminearum identifies a novel genus-specific CYP51 function.</title>
        <authorList>
            <person name="Fan J."/>
            <person name="Urban M."/>
            <person name="Parker J.E."/>
            <person name="Brewer H.C."/>
            <person name="Kelly S.L."/>
            <person name="Hammond-Kosack K.E."/>
            <person name="Fraaije B.A."/>
            <person name="Liu X."/>
            <person name="Cools H.J."/>
        </authorList>
    </citation>
    <scope>FUNCTION</scope>
    <scope>DISRUPTION PHENOTYPE</scope>
    <scope>PATHWAY</scope>
</reference>
<reference key="5">
    <citation type="journal article" date="2014" name="Fungal Genet. Biol.">
        <title>Functional characterization of FgERG3 and FgERG5 associated with ergosterol biosynthesis, vegetative differentiation and virulence of Fusarium graminearum.</title>
        <authorList>
            <person name="Yun Y."/>
            <person name="Yin D."/>
            <person name="Dawood D.H."/>
            <person name="Liu X."/>
            <person name="Chen Y."/>
            <person name="Ma Z."/>
        </authorList>
    </citation>
    <scope>DISRUPTION PHENOTYPE</scope>
</reference>
<evidence type="ECO:0000250" key="1">
    <source>
        <dbReference type="UniProtKB" id="P04798"/>
    </source>
</evidence>
<evidence type="ECO:0000250" key="2">
    <source>
        <dbReference type="UniProtKB" id="P54781"/>
    </source>
</evidence>
<evidence type="ECO:0000255" key="3"/>
<evidence type="ECO:0000269" key="4">
    <source>
    </source>
</evidence>
<evidence type="ECO:0000269" key="5">
    <source>
    </source>
</evidence>
<evidence type="ECO:0000303" key="6">
    <source>
    </source>
</evidence>
<evidence type="ECO:0000305" key="7"/>
<evidence type="ECO:0000305" key="8">
    <source>
    </source>
</evidence>
<feature type="chain" id="PRO_0000454354" description="C-22 sterol desaturase ERG5B">
    <location>
        <begin position="1"/>
        <end position="534"/>
    </location>
</feature>
<feature type="transmembrane region" description="Helical" evidence="3">
    <location>
        <begin position="43"/>
        <end position="61"/>
    </location>
</feature>
<feature type="binding site" description="axial binding residue" evidence="1">
    <location>
        <position position="480"/>
    </location>
    <ligand>
        <name>heme</name>
        <dbReference type="ChEBI" id="CHEBI:30413"/>
    </ligand>
    <ligandPart>
        <name>Fe</name>
        <dbReference type="ChEBI" id="CHEBI:18248"/>
    </ligandPart>
</feature>
<gene>
    <name evidence="6" type="primary">ERG5B</name>
    <name type="ORF">FG03686</name>
    <name type="ORF">FGRAMPH1_01T13463</name>
</gene>
<protein>
    <recommendedName>
        <fullName evidence="6">C-22 sterol desaturase ERG5B</fullName>
        <ecNumber evidence="8">1.14.19.41</ecNumber>
    </recommendedName>
    <alternativeName>
        <fullName evidence="6">Ergosterol biosynthetic protein 5B</fullName>
    </alternativeName>
</protein>
<accession>A0A098DJ84</accession>
<accession>A0A0E0S4W0</accession>
<organism>
    <name type="scientific">Gibberella zeae (strain ATCC MYA-4620 / CBS 123657 / FGSC 9075 / NRRL 31084 / PH-1)</name>
    <name type="common">Wheat head blight fungus</name>
    <name type="synonym">Fusarium graminearum</name>
    <dbReference type="NCBI Taxonomy" id="229533"/>
    <lineage>
        <taxon>Eukaryota</taxon>
        <taxon>Fungi</taxon>
        <taxon>Dikarya</taxon>
        <taxon>Ascomycota</taxon>
        <taxon>Pezizomycotina</taxon>
        <taxon>Sordariomycetes</taxon>
        <taxon>Hypocreomycetidae</taxon>
        <taxon>Hypocreales</taxon>
        <taxon>Nectriaceae</taxon>
        <taxon>Fusarium</taxon>
    </lineage>
</organism>
<name>ERG5B_GIBZE</name>
<keyword id="KW-0256">Endoplasmic reticulum</keyword>
<keyword id="KW-0408">Iron</keyword>
<keyword id="KW-0444">Lipid biosynthesis</keyword>
<keyword id="KW-0443">Lipid metabolism</keyword>
<keyword id="KW-0472">Membrane</keyword>
<keyword id="KW-0479">Metal-binding</keyword>
<keyword id="KW-0503">Monooxygenase</keyword>
<keyword id="KW-0560">Oxidoreductase</keyword>
<keyword id="KW-1185">Reference proteome</keyword>
<keyword id="KW-0752">Steroid biosynthesis</keyword>
<keyword id="KW-0753">Steroid metabolism</keyword>
<keyword id="KW-0756">Sterol biosynthesis</keyword>
<keyword id="KW-1207">Sterol metabolism</keyword>
<keyword id="KW-0812">Transmembrane</keyword>
<keyword id="KW-1133">Transmembrane helix</keyword>
<comment type="function">
    <text evidence="2 8">C-22 sterol desaturase; part of the third module of ergosterol biosynthesis pathway that includes the late steps of the pathway (By similarity). ERG5A and ERG5B convert 5-dehydroepisterol into ergosta-5,7,22,24(28)-tetraen-3beta-ol by forming the C-22(23) double bond in the sterol side chain (By similarity). The third module or late pathway involves the ergosterol synthesis itself through consecutive reactions that mainly occur in the endoplasmic reticulum (ER) membrane. Firstly, the squalene synthase ERG9 catalyzes the condensation of 2 farnesyl pyrophosphate moieties to form squalene, which is the precursor of all steroids. Squalene synthase is crucial for balancing the incorporation of farnesyl diphosphate (FPP) into sterol and nonsterol isoprene synthesis. Secondly, squalene is converted into lanosterol by the consecutive action of the squalene epoxidase ERG1 and the lanosterol synthase ERG7. Then, the delta(24)-sterol C-methyltransferase ERG6 methylates lanosterol at C-24 to produce eburicol. Eburicol is the substrate of the sterol 14-alpha demethylase encoded by CYP51A, CYP51B and CYP51C, to yield 4,4,24-trimethyl ergosta-8,14,24(28)-trienol. CYP51B encodes the enzyme primarily responsible for sterol 14-alpha-demethylation, and plays an essential role in ascospore formation. CYP51A encodes an additional sterol 14-alpha-demethylase, induced on ergosterol depletion and responsible for the intrinsic variation in azole sensitivity. The third CYP51 isoform, CYP51C, does not encode a sterol 14-alpha-demethylase, but is required for full virulence on host wheat ears. The C-14 reductase ERG24 then reduces the C14=C15 double bond which leads to 4,4-dimethylfecosterol. A sequence of further demethylations at C-4, involving the C-4 demethylation complex containing the C-4 methylsterol oxidases ERG25, the sterol-4-alpha-carboxylate 3-dehydrogenase ERG26 and the 3-keto-steroid reductase ERG27, leads to the production of fecosterol via 4-methylfecosterol. ERG28 has a role as a scaffold to help anchor ERG25, ERG26 and ERG27 to the endoplasmic reticulum. The C-8 sterol isomerase ERG2 then catalyzes the reaction which results in unsaturation at C-7 in the B ring of sterols and thus converts fecosterol to episterol. The sterol-C5-desaturases ERG3A and ERG3BB then catalyze the introduction of a C-5 double bond in the B ring to produce 5-dehydroepisterol. The C-22 sterol desaturases ERG5A and ERG5B further convert 5-dehydroepisterol into ergosta-5,7,22,24(28)-tetraen-3beta-ol by forming the C-22(23) double bond in the sterol side chain. Finally, ergosta-5,7,22,24(28)-tetraen-3beta-ol is substrate of the C-24(28) sterol reductase ERG4 to produce ergosterol (Probable).</text>
</comment>
<comment type="catalytic activity">
    <reaction evidence="8">
        <text>5-dehydroepisterol + NADPH + O2 + H(+) = ergosta-5,7,22,24(28)-tetraen-3beta-ol + NADP(+) + 2 H2O</text>
        <dbReference type="Rhea" id="RHEA:33467"/>
        <dbReference type="ChEBI" id="CHEBI:15377"/>
        <dbReference type="ChEBI" id="CHEBI:15378"/>
        <dbReference type="ChEBI" id="CHEBI:15379"/>
        <dbReference type="ChEBI" id="CHEBI:18249"/>
        <dbReference type="ChEBI" id="CHEBI:52972"/>
        <dbReference type="ChEBI" id="CHEBI:57783"/>
        <dbReference type="ChEBI" id="CHEBI:58349"/>
        <dbReference type="EC" id="1.14.19.41"/>
    </reaction>
    <physiologicalReaction direction="left-to-right" evidence="8">
        <dbReference type="Rhea" id="RHEA:33468"/>
    </physiologicalReaction>
</comment>
<comment type="cofactor">
    <cofactor evidence="1">
        <name>heme</name>
        <dbReference type="ChEBI" id="CHEBI:30413"/>
    </cofactor>
</comment>
<comment type="pathway">
    <text evidence="8">Steroid metabolism; ergosterol biosynthesis.</text>
</comment>
<comment type="subcellular location">
    <subcellularLocation>
        <location evidence="7">Endoplasmic reticulum membrane</location>
        <topology evidence="3">Single-pass membrane protein</topology>
    </subcellularLocation>
</comment>
<comment type="disruption phenotype">
    <text evidence="4 5">Leads to a severe decrease in conidiation and virulence when ERG5A is also deleted (PubMed:23442154). The absence of both ERG5A and ERG5B seems not to affect the ergosterol production (PubMed:24785759).</text>
</comment>
<comment type="miscellaneous">
    <text evidence="4">In Fusarium, the biosynthesis pathway of the sterol precursors leading to the prevalent sterol ergosterol differs from yeast. The ringsystem of lanosterol in S.cerevisiae is firstly demethylised in three enzymatic steps leading to the intermediate zymosterol and secondly a methyl group is added to zymosterol by the sterol 24-C-methyltransferase to form fecosterol. In Fusarium, lanosterol is firstly transmethylated by the sterol 24-C-methyltransferase leading to the intermediate eburicol and secondly demethylated in three steps to form fecosterol.</text>
</comment>
<comment type="similarity">
    <text evidence="7">Belongs to the cytochrome P450 family.</text>
</comment>
<dbReference type="EC" id="1.14.19.41" evidence="8"/>
<dbReference type="EMBL" id="HG970333">
    <property type="protein sequence ID" value="CEF78535.1"/>
    <property type="molecule type" value="Genomic_DNA"/>
</dbReference>
<dbReference type="SMR" id="A0A098DJ84"/>
<dbReference type="FunCoup" id="A0A098DJ84">
    <property type="interactions" value="1556"/>
</dbReference>
<dbReference type="STRING" id="229533.A0A098DJ84"/>
<dbReference type="VEuPathDB" id="FungiDB:FGRAMPH1_01G13463"/>
<dbReference type="eggNOG" id="KOG0157">
    <property type="taxonomic scope" value="Eukaryota"/>
</dbReference>
<dbReference type="InParanoid" id="A0A098DJ84"/>
<dbReference type="UniPathway" id="UPA00768"/>
<dbReference type="Proteomes" id="UP000070720">
    <property type="component" value="Chromosome 2"/>
</dbReference>
<dbReference type="GO" id="GO:0005789">
    <property type="term" value="C:endoplasmic reticulum membrane"/>
    <property type="evidence" value="ECO:0007669"/>
    <property type="project" value="UniProtKB-SubCell"/>
</dbReference>
<dbReference type="GO" id="GO:0020037">
    <property type="term" value="F:heme binding"/>
    <property type="evidence" value="ECO:0007669"/>
    <property type="project" value="InterPro"/>
</dbReference>
<dbReference type="GO" id="GO:0005506">
    <property type="term" value="F:iron ion binding"/>
    <property type="evidence" value="ECO:0007669"/>
    <property type="project" value="InterPro"/>
</dbReference>
<dbReference type="GO" id="GO:0004497">
    <property type="term" value="F:monooxygenase activity"/>
    <property type="evidence" value="ECO:0007669"/>
    <property type="project" value="UniProtKB-KW"/>
</dbReference>
<dbReference type="GO" id="GO:0016705">
    <property type="term" value="F:oxidoreductase activity, acting on paired donors, with incorporation or reduction of molecular oxygen"/>
    <property type="evidence" value="ECO:0007669"/>
    <property type="project" value="InterPro"/>
</dbReference>
<dbReference type="GO" id="GO:0016126">
    <property type="term" value="P:sterol biosynthetic process"/>
    <property type="evidence" value="ECO:0007669"/>
    <property type="project" value="UniProtKB-UniPathway"/>
</dbReference>
<dbReference type="FunFam" id="1.10.630.10:FF:000021">
    <property type="entry name" value="Cytochrome P450 61"/>
    <property type="match status" value="1"/>
</dbReference>
<dbReference type="Gene3D" id="1.10.630.10">
    <property type="entry name" value="Cytochrome P450"/>
    <property type="match status" value="1"/>
</dbReference>
<dbReference type="InterPro" id="IPR001128">
    <property type="entry name" value="Cyt_P450"/>
</dbReference>
<dbReference type="InterPro" id="IPR002403">
    <property type="entry name" value="Cyt_P450_E_grp-IV"/>
</dbReference>
<dbReference type="InterPro" id="IPR036396">
    <property type="entry name" value="Cyt_P450_sf"/>
</dbReference>
<dbReference type="PANTHER" id="PTHR24286:SF228">
    <property type="entry name" value="C-22 STEROL DESATURASE ERG5"/>
    <property type="match status" value="1"/>
</dbReference>
<dbReference type="PANTHER" id="PTHR24286">
    <property type="entry name" value="CYTOCHROME P450 26"/>
    <property type="match status" value="1"/>
</dbReference>
<dbReference type="Pfam" id="PF00067">
    <property type="entry name" value="p450"/>
    <property type="match status" value="1"/>
</dbReference>
<dbReference type="PRINTS" id="PR00465">
    <property type="entry name" value="EP450IV"/>
</dbReference>
<dbReference type="SUPFAM" id="SSF48264">
    <property type="entry name" value="Cytochrome P450"/>
    <property type="match status" value="1"/>
</dbReference>
<dbReference type="PROSITE" id="PS00086">
    <property type="entry name" value="CYTOCHROME_P450"/>
    <property type="match status" value="1"/>
</dbReference>
<proteinExistence type="inferred from homology"/>